<name>COAE_RICTY</name>
<proteinExistence type="inferred from homology"/>
<dbReference type="EC" id="2.7.1.24" evidence="1"/>
<dbReference type="EMBL" id="AE017197">
    <property type="protein sequence ID" value="AAU04175.1"/>
    <property type="molecule type" value="Genomic_DNA"/>
</dbReference>
<dbReference type="RefSeq" id="WP_011191151.1">
    <property type="nucleotide sequence ID" value="NC_006142.1"/>
</dbReference>
<dbReference type="SMR" id="Q68W17"/>
<dbReference type="KEGG" id="rty:RT0717"/>
<dbReference type="eggNOG" id="COG0237">
    <property type="taxonomic scope" value="Bacteria"/>
</dbReference>
<dbReference type="HOGENOM" id="CLU_057180_3_1_5"/>
<dbReference type="OrthoDB" id="9812943at2"/>
<dbReference type="UniPathway" id="UPA00241">
    <property type="reaction ID" value="UER00356"/>
</dbReference>
<dbReference type="Proteomes" id="UP000000604">
    <property type="component" value="Chromosome"/>
</dbReference>
<dbReference type="GO" id="GO:0005737">
    <property type="term" value="C:cytoplasm"/>
    <property type="evidence" value="ECO:0007669"/>
    <property type="project" value="UniProtKB-SubCell"/>
</dbReference>
<dbReference type="GO" id="GO:0005524">
    <property type="term" value="F:ATP binding"/>
    <property type="evidence" value="ECO:0007669"/>
    <property type="project" value="UniProtKB-UniRule"/>
</dbReference>
<dbReference type="GO" id="GO:0004140">
    <property type="term" value="F:dephospho-CoA kinase activity"/>
    <property type="evidence" value="ECO:0007669"/>
    <property type="project" value="UniProtKB-UniRule"/>
</dbReference>
<dbReference type="GO" id="GO:0015937">
    <property type="term" value="P:coenzyme A biosynthetic process"/>
    <property type="evidence" value="ECO:0007669"/>
    <property type="project" value="UniProtKB-UniRule"/>
</dbReference>
<dbReference type="CDD" id="cd02022">
    <property type="entry name" value="DPCK"/>
    <property type="match status" value="1"/>
</dbReference>
<dbReference type="Gene3D" id="3.40.50.300">
    <property type="entry name" value="P-loop containing nucleotide triphosphate hydrolases"/>
    <property type="match status" value="1"/>
</dbReference>
<dbReference type="HAMAP" id="MF_00376">
    <property type="entry name" value="Dephospho_CoA_kinase"/>
    <property type="match status" value="1"/>
</dbReference>
<dbReference type="InterPro" id="IPR001977">
    <property type="entry name" value="Depp_CoAkinase"/>
</dbReference>
<dbReference type="InterPro" id="IPR027417">
    <property type="entry name" value="P-loop_NTPase"/>
</dbReference>
<dbReference type="NCBIfam" id="TIGR00152">
    <property type="entry name" value="dephospho-CoA kinase"/>
    <property type="match status" value="1"/>
</dbReference>
<dbReference type="Pfam" id="PF01121">
    <property type="entry name" value="CoaE"/>
    <property type="match status" value="1"/>
</dbReference>
<dbReference type="SUPFAM" id="SSF52540">
    <property type="entry name" value="P-loop containing nucleoside triphosphate hydrolases"/>
    <property type="match status" value="1"/>
</dbReference>
<dbReference type="PROSITE" id="PS51219">
    <property type="entry name" value="DPCK"/>
    <property type="match status" value="1"/>
</dbReference>
<gene>
    <name evidence="1" type="primary">coaE</name>
    <name type="ordered locus">RT0717</name>
</gene>
<protein>
    <recommendedName>
        <fullName evidence="1">Dephospho-CoA kinase</fullName>
        <ecNumber evidence="1">2.7.1.24</ecNumber>
    </recommendedName>
    <alternativeName>
        <fullName evidence="1">Dephosphocoenzyme A kinase</fullName>
    </alternativeName>
</protein>
<sequence length="191" mass="22354">MLAIGITGSYASGKTFILNYLSEKGYKTFCADNCIKELYKDIVLQTQILKLLPELKYFNIRKISNLIYNDDIAREKLQNFIYPLLIDKLILFKKENTNYKFVFSEIPLLYEAKFDQYFDFVVTIYCSEEIRMQRAITRASFDINIYNKIKEIQLSQDSKIAKADFAINSGVDMLDLEKQITKLIKNLECQV</sequence>
<reference key="1">
    <citation type="journal article" date="2004" name="J. Bacteriol.">
        <title>Complete genome sequence of Rickettsia typhi and comparison with sequences of other Rickettsiae.</title>
        <authorList>
            <person name="McLeod M.P."/>
            <person name="Qin X."/>
            <person name="Karpathy S.E."/>
            <person name="Gioia J."/>
            <person name="Highlander S.K."/>
            <person name="Fox G.E."/>
            <person name="McNeill T.Z."/>
            <person name="Jiang H."/>
            <person name="Muzny D."/>
            <person name="Jacob L.S."/>
            <person name="Hawes A.C."/>
            <person name="Sodergren E."/>
            <person name="Gill R."/>
            <person name="Hume J."/>
            <person name="Morgan M."/>
            <person name="Fan G."/>
            <person name="Amin A.G."/>
            <person name="Gibbs R.A."/>
            <person name="Hong C."/>
            <person name="Yu X.-J."/>
            <person name="Walker D.H."/>
            <person name="Weinstock G.M."/>
        </authorList>
    </citation>
    <scope>NUCLEOTIDE SEQUENCE [LARGE SCALE GENOMIC DNA]</scope>
    <source>
        <strain>ATCC VR-144 / Wilmington</strain>
    </source>
</reference>
<accession>Q68W17</accession>
<comment type="function">
    <text evidence="1">Catalyzes the phosphorylation of the 3'-hydroxyl group of dephosphocoenzyme A to form coenzyme A.</text>
</comment>
<comment type="catalytic activity">
    <reaction evidence="1">
        <text>3'-dephospho-CoA + ATP = ADP + CoA + H(+)</text>
        <dbReference type="Rhea" id="RHEA:18245"/>
        <dbReference type="ChEBI" id="CHEBI:15378"/>
        <dbReference type="ChEBI" id="CHEBI:30616"/>
        <dbReference type="ChEBI" id="CHEBI:57287"/>
        <dbReference type="ChEBI" id="CHEBI:57328"/>
        <dbReference type="ChEBI" id="CHEBI:456216"/>
        <dbReference type="EC" id="2.7.1.24"/>
    </reaction>
</comment>
<comment type="pathway">
    <text evidence="1">Cofactor biosynthesis; coenzyme A biosynthesis; CoA from (R)-pantothenate: step 5/5.</text>
</comment>
<comment type="subcellular location">
    <subcellularLocation>
        <location evidence="1">Cytoplasm</location>
    </subcellularLocation>
</comment>
<comment type="similarity">
    <text evidence="1">Belongs to the CoaE family.</text>
</comment>
<evidence type="ECO:0000255" key="1">
    <source>
        <dbReference type="HAMAP-Rule" id="MF_00376"/>
    </source>
</evidence>
<keyword id="KW-0067">ATP-binding</keyword>
<keyword id="KW-0173">Coenzyme A biosynthesis</keyword>
<keyword id="KW-0963">Cytoplasm</keyword>
<keyword id="KW-0418">Kinase</keyword>
<keyword id="KW-0547">Nucleotide-binding</keyword>
<keyword id="KW-0808">Transferase</keyword>
<organism>
    <name type="scientific">Rickettsia typhi (strain ATCC VR-144 / Wilmington)</name>
    <dbReference type="NCBI Taxonomy" id="257363"/>
    <lineage>
        <taxon>Bacteria</taxon>
        <taxon>Pseudomonadati</taxon>
        <taxon>Pseudomonadota</taxon>
        <taxon>Alphaproteobacteria</taxon>
        <taxon>Rickettsiales</taxon>
        <taxon>Rickettsiaceae</taxon>
        <taxon>Rickettsieae</taxon>
        <taxon>Rickettsia</taxon>
        <taxon>typhus group</taxon>
    </lineage>
</organism>
<feature type="chain" id="PRO_0000243334" description="Dephospho-CoA kinase">
    <location>
        <begin position="1"/>
        <end position="191"/>
    </location>
</feature>
<feature type="domain" description="DPCK" evidence="1">
    <location>
        <begin position="3"/>
        <end position="191"/>
    </location>
</feature>
<feature type="binding site" evidence="1">
    <location>
        <begin position="11"/>
        <end position="16"/>
    </location>
    <ligand>
        <name>ATP</name>
        <dbReference type="ChEBI" id="CHEBI:30616"/>
    </ligand>
</feature>